<accession>O49146</accession>
<evidence type="ECO:0000250" key="1"/>
<evidence type="ECO:0000255" key="2"/>
<evidence type="ECO:0000305" key="3"/>
<name>IP22_CAPAN</name>
<protein>
    <recommendedName>
        <fullName>Wound-induced proteinase inhibitor 2</fullName>
    </recommendedName>
    <alternativeName>
        <fullName>Wound-induced proteinase inhibitor II</fullName>
    </alternativeName>
</protein>
<proteinExistence type="evidence at transcript level"/>
<feature type="signal peptide" evidence="2">
    <location>
        <begin position="1"/>
        <end position="25"/>
    </location>
</feature>
<feature type="chain" id="PRO_0000025309" description="Wound-induced proteinase inhibitor 2">
    <location>
        <begin position="26"/>
        <end position="204"/>
    </location>
</feature>
<feature type="repeat" description="1">
    <location>
        <begin position="25"/>
        <end position="67"/>
    </location>
</feature>
<feature type="repeat" description="2">
    <location>
        <begin position="68"/>
        <end position="125"/>
    </location>
</feature>
<feature type="repeat" description="3">
    <location>
        <begin position="126"/>
        <end position="183"/>
    </location>
</feature>
<feature type="repeat" description="4; truncated">
    <location>
        <begin position="184"/>
        <end position="204"/>
    </location>
</feature>
<feature type="disulfide bond" evidence="1">
    <location>
        <begin position="28"/>
        <end position="100"/>
    </location>
</feature>
<feature type="disulfide bond" evidence="1">
    <location>
        <begin position="38"/>
        <end position="75"/>
    </location>
</feature>
<feature type="disulfide bond" evidence="1">
    <location>
        <begin position="41"/>
        <end position="59"/>
    </location>
</feature>
<feature type="disulfide bond" evidence="1">
    <location>
        <begin position="42"/>
        <end position="71"/>
    </location>
</feature>
<feature type="disulfide bond" evidence="1">
    <location>
        <begin position="48"/>
        <end position="84"/>
    </location>
</feature>
<feature type="disulfide bond" evidence="1">
    <location>
        <begin position="99"/>
        <end position="117"/>
    </location>
</feature>
<keyword id="KW-1015">Disulfide bond</keyword>
<keyword id="KW-0646">Protease inhibitor</keyword>
<keyword id="KW-0677">Repeat</keyword>
<keyword id="KW-0722">Serine protease inhibitor</keyword>
<keyword id="KW-0732">Signal</keyword>
<dbReference type="EMBL" id="AF039398">
    <property type="protein sequence ID" value="AAB94771.1"/>
    <property type="molecule type" value="mRNA"/>
</dbReference>
<dbReference type="PIR" id="T08072">
    <property type="entry name" value="T08072"/>
</dbReference>
<dbReference type="SMR" id="O49146"/>
<dbReference type="MEROPS" id="I20.952"/>
<dbReference type="GO" id="GO:0004867">
    <property type="term" value="F:serine-type endopeptidase inhibitor activity"/>
    <property type="evidence" value="ECO:0007669"/>
    <property type="project" value="UniProtKB-KW"/>
</dbReference>
<dbReference type="Gene3D" id="3.30.60.30">
    <property type="match status" value="3"/>
</dbReference>
<dbReference type="InterPro" id="IPR003465">
    <property type="entry name" value="Prot_inh_I20"/>
</dbReference>
<dbReference type="InterPro" id="IPR051391">
    <property type="entry name" value="Protease_inhibitor_I20"/>
</dbReference>
<dbReference type="PANTHER" id="PTHR33832:SF23">
    <property type="entry name" value="PROTEINASE INHIBITOR TYPE-2 P303.51"/>
    <property type="match status" value="1"/>
</dbReference>
<dbReference type="PANTHER" id="PTHR33832">
    <property type="entry name" value="SERINE-TYPE ENDOPEPTIDASE INHIBITOR"/>
    <property type="match status" value="1"/>
</dbReference>
<dbReference type="Pfam" id="PF02428">
    <property type="entry name" value="Prot_inhib_II"/>
    <property type="match status" value="3"/>
</dbReference>
<dbReference type="SUPFAM" id="SSF100897">
    <property type="entry name" value="Plant proteinase inhibitors"/>
    <property type="match status" value="3"/>
</dbReference>
<organism>
    <name type="scientific">Capsicum annuum</name>
    <name type="common">Capsicum pepper</name>
    <dbReference type="NCBI Taxonomy" id="4072"/>
    <lineage>
        <taxon>Eukaryota</taxon>
        <taxon>Viridiplantae</taxon>
        <taxon>Streptophyta</taxon>
        <taxon>Embryophyta</taxon>
        <taxon>Tracheophyta</taxon>
        <taxon>Spermatophyta</taxon>
        <taxon>Magnoliopsida</taxon>
        <taxon>eudicotyledons</taxon>
        <taxon>Gunneridae</taxon>
        <taxon>Pentapetalae</taxon>
        <taxon>asterids</taxon>
        <taxon>lamiids</taxon>
        <taxon>Solanales</taxon>
        <taxon>Solanaceae</taxon>
        <taxon>Solanoideae</taxon>
        <taxon>Capsiceae</taxon>
        <taxon>Capsicum</taxon>
    </lineage>
</organism>
<comment type="similarity">
    <text evidence="3">Belongs to the protease inhibitor I20 (potato type II proteinase inhibitor) family.</text>
</comment>
<sequence length="204" mass="22187">MAVPKEVSFLASLLVLGILLLHVDAKACSQRNAKEPICTNCCAGRKGCNYYSADGTFICEGESDPNNPKPCTLNCDPRIFYSKCPRSEGNAENRICTNCCAGRKGCNYYSADGTFICEGESDPNNPKPCTLNCDPRIFYSKCPRSEASAEQPICTNCCAGLKGCNYYNADGTFICEGESDPNHPKACPKNCDPNIAYSLCLYEK</sequence>
<reference key="1">
    <citation type="submission" date="1997-12" db="EMBL/GenBank/DDBJ databases">
        <authorList>
            <person name="Kim S.-H."/>
            <person name="Choi D.-S."/>
            <person name="Lee K.-W."/>
        </authorList>
    </citation>
    <scope>NUCLEOTIDE SEQUENCE [MRNA]</scope>
    <source>
        <strain>cv. Hot pepper</strain>
        <tissue>Pericarp</tissue>
    </source>
</reference>
<gene>
    <name type="primary">PIN2</name>
</gene>